<accession>B3Q5Z9</accession>
<organism>
    <name type="scientific">Rhodopseudomonas palustris (strain TIE-1)</name>
    <dbReference type="NCBI Taxonomy" id="395960"/>
    <lineage>
        <taxon>Bacteria</taxon>
        <taxon>Pseudomonadati</taxon>
        <taxon>Pseudomonadota</taxon>
        <taxon>Alphaproteobacteria</taxon>
        <taxon>Hyphomicrobiales</taxon>
        <taxon>Nitrobacteraceae</taxon>
        <taxon>Rhodopseudomonas</taxon>
    </lineage>
</organism>
<evidence type="ECO:0000255" key="1">
    <source>
        <dbReference type="HAMAP-Rule" id="MF_00238"/>
    </source>
</evidence>
<sequence length="212" mass="22521">MIIAIDGPAASGKGTLAKRLAAHYGFRHLDTGVIYRAVAKAMLDAGADLTDEARAAEVARTLDPSRFDDPALKSHAVGEAASVVSAHPQVRAALVEFQKTFAAAPPGAVLDGRDIGTVICPDAEVKIFVVASPEVRAHRRFLEAQSRGEPADEAVILSDIVKRDERDKNRSAAPLKQAPDAVLLDNSYLDIEGGVRAAIDIVEAVRAGRRRV</sequence>
<proteinExistence type="inferred from homology"/>
<reference key="1">
    <citation type="submission" date="2008-05" db="EMBL/GenBank/DDBJ databases">
        <title>Complete sequence of Rhodopseudomonas palustris TIE-1.</title>
        <authorList>
            <consortium name="US DOE Joint Genome Institute"/>
            <person name="Lucas S."/>
            <person name="Copeland A."/>
            <person name="Lapidus A."/>
            <person name="Glavina del Rio T."/>
            <person name="Dalin E."/>
            <person name="Tice H."/>
            <person name="Pitluck S."/>
            <person name="Chain P."/>
            <person name="Malfatti S."/>
            <person name="Shin M."/>
            <person name="Vergez L."/>
            <person name="Lang D."/>
            <person name="Schmutz J."/>
            <person name="Larimer F."/>
            <person name="Land M."/>
            <person name="Hauser L."/>
            <person name="Kyrpides N."/>
            <person name="Mikhailova N."/>
            <person name="Emerson D."/>
            <person name="Newman D.K."/>
            <person name="Roden E."/>
            <person name="Richardson P."/>
        </authorList>
    </citation>
    <scope>NUCLEOTIDE SEQUENCE [LARGE SCALE GENOMIC DNA]</scope>
    <source>
        <strain>TIE-1</strain>
    </source>
</reference>
<gene>
    <name evidence="1" type="primary">cmk</name>
    <name type="ordered locus">Rpal_0066</name>
</gene>
<name>KCY_RHOPT</name>
<protein>
    <recommendedName>
        <fullName evidence="1">Cytidylate kinase</fullName>
        <shortName evidence="1">CK</shortName>
        <ecNumber evidence="1">2.7.4.25</ecNumber>
    </recommendedName>
    <alternativeName>
        <fullName evidence="1">Cytidine monophosphate kinase</fullName>
        <shortName evidence="1">CMP kinase</shortName>
    </alternativeName>
</protein>
<comment type="catalytic activity">
    <reaction evidence="1">
        <text>CMP + ATP = CDP + ADP</text>
        <dbReference type="Rhea" id="RHEA:11600"/>
        <dbReference type="ChEBI" id="CHEBI:30616"/>
        <dbReference type="ChEBI" id="CHEBI:58069"/>
        <dbReference type="ChEBI" id="CHEBI:60377"/>
        <dbReference type="ChEBI" id="CHEBI:456216"/>
        <dbReference type="EC" id="2.7.4.25"/>
    </reaction>
</comment>
<comment type="catalytic activity">
    <reaction evidence="1">
        <text>dCMP + ATP = dCDP + ADP</text>
        <dbReference type="Rhea" id="RHEA:25094"/>
        <dbReference type="ChEBI" id="CHEBI:30616"/>
        <dbReference type="ChEBI" id="CHEBI:57566"/>
        <dbReference type="ChEBI" id="CHEBI:58593"/>
        <dbReference type="ChEBI" id="CHEBI:456216"/>
        <dbReference type="EC" id="2.7.4.25"/>
    </reaction>
</comment>
<comment type="subcellular location">
    <subcellularLocation>
        <location evidence="1">Cytoplasm</location>
    </subcellularLocation>
</comment>
<comment type="similarity">
    <text evidence="1">Belongs to the cytidylate kinase family. Type 1 subfamily.</text>
</comment>
<dbReference type="EC" id="2.7.4.25" evidence="1"/>
<dbReference type="EMBL" id="CP001096">
    <property type="protein sequence ID" value="ACE98628.1"/>
    <property type="molecule type" value="Genomic_DNA"/>
</dbReference>
<dbReference type="RefSeq" id="WP_012493898.1">
    <property type="nucleotide sequence ID" value="NC_011004.1"/>
</dbReference>
<dbReference type="SMR" id="B3Q5Z9"/>
<dbReference type="KEGG" id="rpt:Rpal_0066"/>
<dbReference type="HOGENOM" id="CLU_079959_0_1_5"/>
<dbReference type="OrthoDB" id="9807434at2"/>
<dbReference type="Proteomes" id="UP000001725">
    <property type="component" value="Chromosome"/>
</dbReference>
<dbReference type="GO" id="GO:0005737">
    <property type="term" value="C:cytoplasm"/>
    <property type="evidence" value="ECO:0007669"/>
    <property type="project" value="UniProtKB-SubCell"/>
</dbReference>
<dbReference type="GO" id="GO:0005524">
    <property type="term" value="F:ATP binding"/>
    <property type="evidence" value="ECO:0007669"/>
    <property type="project" value="UniProtKB-UniRule"/>
</dbReference>
<dbReference type="GO" id="GO:0036430">
    <property type="term" value="F:CMP kinase activity"/>
    <property type="evidence" value="ECO:0007669"/>
    <property type="project" value="RHEA"/>
</dbReference>
<dbReference type="GO" id="GO:0036431">
    <property type="term" value="F:dCMP kinase activity"/>
    <property type="evidence" value="ECO:0007669"/>
    <property type="project" value="RHEA"/>
</dbReference>
<dbReference type="GO" id="GO:0006220">
    <property type="term" value="P:pyrimidine nucleotide metabolic process"/>
    <property type="evidence" value="ECO:0007669"/>
    <property type="project" value="UniProtKB-UniRule"/>
</dbReference>
<dbReference type="CDD" id="cd02020">
    <property type="entry name" value="CMPK"/>
    <property type="match status" value="1"/>
</dbReference>
<dbReference type="Gene3D" id="3.40.50.300">
    <property type="entry name" value="P-loop containing nucleotide triphosphate hydrolases"/>
    <property type="match status" value="1"/>
</dbReference>
<dbReference type="HAMAP" id="MF_00238">
    <property type="entry name" value="Cytidyl_kinase_type1"/>
    <property type="match status" value="1"/>
</dbReference>
<dbReference type="InterPro" id="IPR003136">
    <property type="entry name" value="Cytidylate_kin"/>
</dbReference>
<dbReference type="InterPro" id="IPR011994">
    <property type="entry name" value="Cytidylate_kinase_dom"/>
</dbReference>
<dbReference type="InterPro" id="IPR027417">
    <property type="entry name" value="P-loop_NTPase"/>
</dbReference>
<dbReference type="NCBIfam" id="TIGR00017">
    <property type="entry name" value="cmk"/>
    <property type="match status" value="1"/>
</dbReference>
<dbReference type="Pfam" id="PF02224">
    <property type="entry name" value="Cytidylate_kin"/>
    <property type="match status" value="1"/>
</dbReference>
<dbReference type="SUPFAM" id="SSF52540">
    <property type="entry name" value="P-loop containing nucleoside triphosphate hydrolases"/>
    <property type="match status" value="1"/>
</dbReference>
<feature type="chain" id="PRO_1000100677" description="Cytidylate kinase">
    <location>
        <begin position="1"/>
        <end position="212"/>
    </location>
</feature>
<feature type="binding site" evidence="1">
    <location>
        <begin position="7"/>
        <end position="15"/>
    </location>
    <ligand>
        <name>ATP</name>
        <dbReference type="ChEBI" id="CHEBI:30616"/>
    </ligand>
</feature>
<keyword id="KW-0067">ATP-binding</keyword>
<keyword id="KW-0963">Cytoplasm</keyword>
<keyword id="KW-0418">Kinase</keyword>
<keyword id="KW-0547">Nucleotide-binding</keyword>
<keyword id="KW-0808">Transferase</keyword>